<reference key="1">
    <citation type="journal article" date="2005" name="Proc. Natl. Acad. Sci. U.S.A.">
        <title>Complete genome sequence of Vibrio fischeri: a symbiotic bacterium with pathogenic congeners.</title>
        <authorList>
            <person name="Ruby E.G."/>
            <person name="Urbanowski M."/>
            <person name="Campbell J."/>
            <person name="Dunn A."/>
            <person name="Faini M."/>
            <person name="Gunsalus R."/>
            <person name="Lostroh P."/>
            <person name="Lupp C."/>
            <person name="McCann J."/>
            <person name="Millikan D."/>
            <person name="Schaefer A."/>
            <person name="Stabb E."/>
            <person name="Stevens A."/>
            <person name="Visick K."/>
            <person name="Whistler C."/>
            <person name="Greenberg E.P."/>
        </authorList>
    </citation>
    <scope>NUCLEOTIDE SEQUENCE [LARGE SCALE GENOMIC DNA]</scope>
    <source>
        <strain>ATCC 700601 / ES114</strain>
    </source>
</reference>
<name>GRCA_ALIF1</name>
<sequence>MITGIQITKAANDDLLNSIWLLDSEKNEARCVVATAGFEADQVIAASELGEYESRDVAIEKAPKIEGGQHLNVNVLQRDTLEDAVKHPENYPQLTIRVSGYAVRFNSLTTEQQKDVIARTFTESL</sequence>
<proteinExistence type="inferred from homology"/>
<accession>Q5E2Y6</accession>
<gene>
    <name evidence="1" type="primary">grcA</name>
    <name type="ordered locus">VF_2115</name>
</gene>
<feature type="chain" id="PRO_1000134002" description="Autonomous glycyl radical cofactor">
    <location>
        <begin position="1"/>
        <end position="125"/>
    </location>
</feature>
<feature type="domain" description="Glycine radical" evidence="1">
    <location>
        <begin position="5"/>
        <end position="125"/>
    </location>
</feature>
<feature type="modified residue" description="Glycine radical" evidence="1">
    <location>
        <position position="100"/>
    </location>
</feature>
<evidence type="ECO:0000255" key="1">
    <source>
        <dbReference type="HAMAP-Rule" id="MF_00806"/>
    </source>
</evidence>
<comment type="function">
    <text evidence="1">Acts as a radical domain for damaged PFL and possibly other radical proteins.</text>
</comment>
<organism>
    <name type="scientific">Aliivibrio fischeri (strain ATCC 700601 / ES114)</name>
    <name type="common">Vibrio fischeri</name>
    <dbReference type="NCBI Taxonomy" id="312309"/>
    <lineage>
        <taxon>Bacteria</taxon>
        <taxon>Pseudomonadati</taxon>
        <taxon>Pseudomonadota</taxon>
        <taxon>Gammaproteobacteria</taxon>
        <taxon>Vibrionales</taxon>
        <taxon>Vibrionaceae</taxon>
        <taxon>Aliivibrio</taxon>
    </lineage>
</organism>
<dbReference type="EMBL" id="CP000020">
    <property type="protein sequence ID" value="AAW86610.1"/>
    <property type="molecule type" value="Genomic_DNA"/>
</dbReference>
<dbReference type="RefSeq" id="WP_005420764.1">
    <property type="nucleotide sequence ID" value="NZ_CAWLES010000001.1"/>
</dbReference>
<dbReference type="RefSeq" id="YP_205498.1">
    <property type="nucleotide sequence ID" value="NC_006840.2"/>
</dbReference>
<dbReference type="SMR" id="Q5E2Y6"/>
<dbReference type="STRING" id="312309.VF_2115"/>
<dbReference type="EnsemblBacteria" id="AAW86610">
    <property type="protein sequence ID" value="AAW86610"/>
    <property type="gene ID" value="VF_2115"/>
</dbReference>
<dbReference type="GeneID" id="54164821"/>
<dbReference type="KEGG" id="vfi:VF_2115"/>
<dbReference type="PATRIC" id="fig|312309.11.peg.2158"/>
<dbReference type="eggNOG" id="COG3445">
    <property type="taxonomic scope" value="Bacteria"/>
</dbReference>
<dbReference type="HOGENOM" id="CLU_133780_0_0_6"/>
<dbReference type="OrthoDB" id="9803969at2"/>
<dbReference type="Proteomes" id="UP000000537">
    <property type="component" value="Chromosome I"/>
</dbReference>
<dbReference type="GO" id="GO:0005829">
    <property type="term" value="C:cytosol"/>
    <property type="evidence" value="ECO:0007669"/>
    <property type="project" value="TreeGrafter"/>
</dbReference>
<dbReference type="GO" id="GO:0008861">
    <property type="term" value="F:formate C-acetyltransferase activity"/>
    <property type="evidence" value="ECO:0007669"/>
    <property type="project" value="TreeGrafter"/>
</dbReference>
<dbReference type="FunFam" id="3.20.70.20:FF:000002">
    <property type="entry name" value="Autonomous glycyl radical cofactor"/>
    <property type="match status" value="1"/>
</dbReference>
<dbReference type="Gene3D" id="3.20.70.20">
    <property type="match status" value="1"/>
</dbReference>
<dbReference type="HAMAP" id="MF_00806">
    <property type="entry name" value="GrcA"/>
    <property type="match status" value="1"/>
</dbReference>
<dbReference type="InterPro" id="IPR050244">
    <property type="entry name" value="Auton_GlycylRad_Cofactor"/>
</dbReference>
<dbReference type="InterPro" id="IPR019777">
    <property type="entry name" value="Form_AcTrfase_GR_CS"/>
</dbReference>
<dbReference type="InterPro" id="IPR001150">
    <property type="entry name" value="Gly_radical"/>
</dbReference>
<dbReference type="InterPro" id="IPR011140">
    <property type="entry name" value="Glycyl_radical_cofactor_GrcA"/>
</dbReference>
<dbReference type="NCBIfam" id="TIGR04365">
    <property type="entry name" value="spare_glycyl"/>
    <property type="match status" value="1"/>
</dbReference>
<dbReference type="PANTHER" id="PTHR30191">
    <property type="entry name" value="FORMATE ACETYLTRANSFERASE"/>
    <property type="match status" value="1"/>
</dbReference>
<dbReference type="PANTHER" id="PTHR30191:SF0">
    <property type="entry name" value="FORMATE ACETYLTRANSFERASE 1"/>
    <property type="match status" value="1"/>
</dbReference>
<dbReference type="Pfam" id="PF01228">
    <property type="entry name" value="Gly_radical"/>
    <property type="match status" value="1"/>
</dbReference>
<dbReference type="PIRSF" id="PIRSF000378">
    <property type="entry name" value="Gly_radicl_yfiD"/>
    <property type="match status" value="1"/>
</dbReference>
<dbReference type="SUPFAM" id="SSF51998">
    <property type="entry name" value="PFL-like glycyl radical enzymes"/>
    <property type="match status" value="1"/>
</dbReference>
<dbReference type="PROSITE" id="PS00850">
    <property type="entry name" value="GLY_RADICAL_1"/>
    <property type="match status" value="1"/>
</dbReference>
<dbReference type="PROSITE" id="PS51149">
    <property type="entry name" value="GLY_RADICAL_2"/>
    <property type="match status" value="1"/>
</dbReference>
<protein>
    <recommendedName>
        <fullName evidence="1">Autonomous glycyl radical cofactor</fullName>
    </recommendedName>
</protein>
<keyword id="KW-0556">Organic radical</keyword>
<keyword id="KW-1185">Reference proteome</keyword>